<reference key="1">
    <citation type="journal article" date="2004" name="J. Mol. Microbiol. Biotechnol.">
        <title>The complete genome sequence of Bacillus licheniformis DSM13, an organism with great industrial potential.</title>
        <authorList>
            <person name="Veith B."/>
            <person name="Herzberg C."/>
            <person name="Steckel S."/>
            <person name="Feesche J."/>
            <person name="Maurer K.H."/>
            <person name="Ehrenreich P."/>
            <person name="Baeumer S."/>
            <person name="Henne A."/>
            <person name="Liesegang H."/>
            <person name="Merkl R."/>
            <person name="Ehrenreich A."/>
            <person name="Gottschalk G."/>
        </authorList>
    </citation>
    <scope>NUCLEOTIDE SEQUENCE [LARGE SCALE GENOMIC DNA]</scope>
    <source>
        <strain>ATCC 14580 / DSM 13 / JCM 2505 / CCUG 7422 / NBRC 12200 / NCIMB 9375 / NCTC 10341 / NRRL NRS-1264 / Gibson 46</strain>
    </source>
</reference>
<reference key="2">
    <citation type="journal article" date="2004" name="Genome Biol.">
        <title>Complete genome sequence of the industrial bacterium Bacillus licheniformis and comparisons with closely related Bacillus species.</title>
        <authorList>
            <person name="Rey M.W."/>
            <person name="Ramaiya P."/>
            <person name="Nelson B.A."/>
            <person name="Brody-Karpin S.D."/>
            <person name="Zaretsky E.J."/>
            <person name="Tang M."/>
            <person name="Lopez de Leon A."/>
            <person name="Xiang H."/>
            <person name="Gusti V."/>
            <person name="Clausen I.G."/>
            <person name="Olsen P.B."/>
            <person name="Rasmussen M.D."/>
            <person name="Andersen J.T."/>
            <person name="Joergensen P.L."/>
            <person name="Larsen T.S."/>
            <person name="Sorokin A."/>
            <person name="Bolotin A."/>
            <person name="Lapidus A."/>
            <person name="Galleron N."/>
            <person name="Ehrlich S.D."/>
            <person name="Berka R.M."/>
        </authorList>
    </citation>
    <scope>NUCLEOTIDE SEQUENCE [LARGE SCALE GENOMIC DNA]</scope>
    <source>
        <strain>ATCC 14580 / DSM 13 / JCM 2505 / CCUG 7422 / NBRC 12200 / NCIMB 9375 / NCTC 10341 / NRRL NRS-1264 / Gibson 46</strain>
    </source>
</reference>
<proteinExistence type="inferred from homology"/>
<name>RL17_BACLD</name>
<evidence type="ECO:0000255" key="1">
    <source>
        <dbReference type="HAMAP-Rule" id="MF_01368"/>
    </source>
</evidence>
<evidence type="ECO:0000305" key="2"/>
<keyword id="KW-1185">Reference proteome</keyword>
<keyword id="KW-0687">Ribonucleoprotein</keyword>
<keyword id="KW-0689">Ribosomal protein</keyword>
<organism>
    <name type="scientific">Bacillus licheniformis (strain ATCC 14580 / DSM 13 / JCM 2505 / CCUG 7422 / NBRC 12200 / NCIMB 9375 / NCTC 10341 / NRRL NRS-1264 / Gibson 46)</name>
    <dbReference type="NCBI Taxonomy" id="279010"/>
    <lineage>
        <taxon>Bacteria</taxon>
        <taxon>Bacillati</taxon>
        <taxon>Bacillota</taxon>
        <taxon>Bacilli</taxon>
        <taxon>Bacillales</taxon>
        <taxon>Bacillaceae</taxon>
        <taxon>Bacillus</taxon>
    </lineage>
</organism>
<protein>
    <recommendedName>
        <fullName evidence="1">Large ribosomal subunit protein bL17</fullName>
    </recommendedName>
    <alternativeName>
        <fullName evidence="2">50S ribosomal protein L17</fullName>
    </alternativeName>
</protein>
<comment type="subunit">
    <text evidence="1">Part of the 50S ribosomal subunit. Contacts protein L32.</text>
</comment>
<comment type="similarity">
    <text evidence="1">Belongs to the bacterial ribosomal protein bL17 family.</text>
</comment>
<sequence>MSYRKLGRTSAQRKAMLRDLTTDLIINERIETTEARAKELRSVVEKMITLGKRGDLHARRQAAAYIRNEVADAEKNQDALQKLFSDVAPRYEERQGGYTRIMKLGPRRGDGAPMAIIELV</sequence>
<accession>Q65P78</accession>
<accession>Q62ZL7</accession>
<feature type="chain" id="PRO_0000267826" description="Large ribosomal subunit protein bL17">
    <location>
        <begin position="1"/>
        <end position="120"/>
    </location>
</feature>
<gene>
    <name evidence="1" type="primary">rplQ</name>
    <name type="ordered locus">BLi00162</name>
    <name type="ordered locus">BL01024</name>
</gene>
<dbReference type="EMBL" id="AE017333">
    <property type="protein sequence ID" value="AAU39136.1"/>
    <property type="molecule type" value="Genomic_DNA"/>
</dbReference>
<dbReference type="EMBL" id="CP000002">
    <property type="protein sequence ID" value="AAU21791.1"/>
    <property type="molecule type" value="Genomic_DNA"/>
</dbReference>
<dbReference type="RefSeq" id="WP_003178384.1">
    <property type="nucleotide sequence ID" value="NC_006322.1"/>
</dbReference>
<dbReference type="SMR" id="Q65P78"/>
<dbReference type="STRING" id="279010.BL01024"/>
<dbReference type="GeneID" id="92858874"/>
<dbReference type="KEGG" id="bld:BLi00162"/>
<dbReference type="KEGG" id="bli:BL01024"/>
<dbReference type="eggNOG" id="COG0203">
    <property type="taxonomic scope" value="Bacteria"/>
</dbReference>
<dbReference type="HOGENOM" id="CLU_074407_2_2_9"/>
<dbReference type="Proteomes" id="UP000000606">
    <property type="component" value="Chromosome"/>
</dbReference>
<dbReference type="GO" id="GO:0022625">
    <property type="term" value="C:cytosolic large ribosomal subunit"/>
    <property type="evidence" value="ECO:0007669"/>
    <property type="project" value="TreeGrafter"/>
</dbReference>
<dbReference type="GO" id="GO:0003735">
    <property type="term" value="F:structural constituent of ribosome"/>
    <property type="evidence" value="ECO:0007669"/>
    <property type="project" value="InterPro"/>
</dbReference>
<dbReference type="GO" id="GO:0006412">
    <property type="term" value="P:translation"/>
    <property type="evidence" value="ECO:0007669"/>
    <property type="project" value="UniProtKB-UniRule"/>
</dbReference>
<dbReference type="FunFam" id="3.90.1030.10:FF:000002">
    <property type="entry name" value="50S ribosomal protein L17"/>
    <property type="match status" value="1"/>
</dbReference>
<dbReference type="Gene3D" id="3.90.1030.10">
    <property type="entry name" value="Ribosomal protein L17"/>
    <property type="match status" value="1"/>
</dbReference>
<dbReference type="HAMAP" id="MF_01368">
    <property type="entry name" value="Ribosomal_bL17"/>
    <property type="match status" value="1"/>
</dbReference>
<dbReference type="InterPro" id="IPR000456">
    <property type="entry name" value="Ribosomal_bL17"/>
</dbReference>
<dbReference type="InterPro" id="IPR047859">
    <property type="entry name" value="Ribosomal_bL17_CS"/>
</dbReference>
<dbReference type="InterPro" id="IPR036373">
    <property type="entry name" value="Ribosomal_bL17_sf"/>
</dbReference>
<dbReference type="NCBIfam" id="TIGR00059">
    <property type="entry name" value="L17"/>
    <property type="match status" value="1"/>
</dbReference>
<dbReference type="PANTHER" id="PTHR14413:SF16">
    <property type="entry name" value="LARGE RIBOSOMAL SUBUNIT PROTEIN BL17M"/>
    <property type="match status" value="1"/>
</dbReference>
<dbReference type="PANTHER" id="PTHR14413">
    <property type="entry name" value="RIBOSOMAL PROTEIN L17"/>
    <property type="match status" value="1"/>
</dbReference>
<dbReference type="Pfam" id="PF01196">
    <property type="entry name" value="Ribosomal_L17"/>
    <property type="match status" value="1"/>
</dbReference>
<dbReference type="SUPFAM" id="SSF64263">
    <property type="entry name" value="Prokaryotic ribosomal protein L17"/>
    <property type="match status" value="1"/>
</dbReference>
<dbReference type="PROSITE" id="PS01167">
    <property type="entry name" value="RIBOSOMAL_L17"/>
    <property type="match status" value="1"/>
</dbReference>